<dbReference type="EMBL" id="AY261361">
    <property type="status" value="NOT_ANNOTATED_CDS"/>
    <property type="molecule type" value="Genomic_DNA"/>
</dbReference>
<dbReference type="Proteomes" id="UP000000860">
    <property type="component" value="Segment"/>
</dbReference>
<dbReference type="InterPro" id="IPR004848">
    <property type="entry name" value="ASFV_fam_110"/>
</dbReference>
<dbReference type="Pfam" id="PF01639">
    <property type="entry name" value="v110"/>
    <property type="match status" value="1"/>
</dbReference>
<accession>P0C9G7</accession>
<reference key="1">
    <citation type="submission" date="2003-03" db="EMBL/GenBank/DDBJ databases">
        <title>African swine fever virus genomes.</title>
        <authorList>
            <person name="Kutish G.F."/>
            <person name="Rock D.L."/>
        </authorList>
    </citation>
    <scope>NUCLEOTIDE SEQUENCE [LARGE SCALE GENOMIC DNA]</scope>
</reference>
<evidence type="ECO:0000250" key="1"/>
<evidence type="ECO:0000250" key="2">
    <source>
        <dbReference type="UniProtKB" id="P18559"/>
    </source>
</evidence>
<evidence type="ECO:0000255" key="3"/>
<evidence type="ECO:0000305" key="4"/>
<feature type="signal peptide" evidence="3">
    <location>
        <begin position="1"/>
        <end position="19"/>
    </location>
</feature>
<feature type="chain" id="PRO_0000373189" description="Protein MGF 110-2L">
    <location>
        <begin position="20"/>
        <end position="116"/>
    </location>
</feature>
<organismHost>
    <name type="scientific">Ornithodoros</name>
    <name type="common">relapsing fever ticks</name>
    <dbReference type="NCBI Taxonomy" id="6937"/>
</organismHost>
<organismHost>
    <name type="scientific">Phacochoerus aethiopicus</name>
    <name type="common">Warthog</name>
    <dbReference type="NCBI Taxonomy" id="85517"/>
</organismHost>
<organismHost>
    <name type="scientific">Phacochoerus africanus</name>
    <name type="common">Warthog</name>
    <dbReference type="NCBI Taxonomy" id="41426"/>
</organismHost>
<organismHost>
    <name type="scientific">Potamochoerus larvatus</name>
    <name type="common">Bushpig</name>
    <dbReference type="NCBI Taxonomy" id="273792"/>
</organismHost>
<organismHost>
    <name type="scientific">Sus scrofa</name>
    <name type="common">Pig</name>
    <dbReference type="NCBI Taxonomy" id="9823"/>
</organismHost>
<gene>
    <name type="ordered locus">Mal-006</name>
</gene>
<organism>
    <name type="scientific">African swine fever virus (isolate Tick/Malawi/Lil 20-1/1983)</name>
    <name type="common">ASFV</name>
    <dbReference type="NCBI Taxonomy" id="10500"/>
    <lineage>
        <taxon>Viruses</taxon>
        <taxon>Varidnaviria</taxon>
        <taxon>Bamfordvirae</taxon>
        <taxon>Nucleocytoviricota</taxon>
        <taxon>Pokkesviricetes</taxon>
        <taxon>Asfuvirales</taxon>
        <taxon>Asfarviridae</taxon>
        <taxon>Asfivirus</taxon>
        <taxon>African swine fever virus</taxon>
    </lineage>
</organism>
<protein>
    <recommendedName>
        <fullName>Protein MGF 110-2L</fullName>
    </recommendedName>
</protein>
<comment type="function">
    <text evidence="1">Plays a role in virus cell tropism, and may be required for efficient virus replication in macrophages.</text>
</comment>
<comment type="induction">
    <text evidence="2">Expressed in the early phase of the viral replicative cycle.</text>
</comment>
<comment type="similarity">
    <text evidence="4">Belongs to the asfivirus MGF 110 family.</text>
</comment>
<proteinExistence type="inferred from homology"/>
<name>1102L_ASFM2</name>
<sequence>MRFFSYLGLLLAGLASLASLAGLVSLANLQDFSTDNPLEEELRCWCQYVKNCRFCWACQDGFCKNKVLKNMPSVQEHSYPMEHCMLHRQCKYIRDGPIFQVECTMQTCDAIRLLNV</sequence>
<keyword id="KW-0244">Early protein</keyword>
<keyword id="KW-0732">Signal</keyword>